<proteinExistence type="inferred from homology"/>
<keyword id="KW-0066">ATP synthesis</keyword>
<keyword id="KW-1003">Cell membrane</keyword>
<keyword id="KW-0139">CF(1)</keyword>
<keyword id="KW-0375">Hydrogen ion transport</keyword>
<keyword id="KW-0406">Ion transport</keyword>
<keyword id="KW-0472">Membrane</keyword>
<keyword id="KW-0813">Transport</keyword>
<sequence length="133" mass="15267">MKDNIELTIFTPEKNIKIGEIKEVITEGLDGDLAILPNHVNMITYLKPTITKYIDLNGNKNNIFTSSGVLKVEDNKVYIICDASEKPEDIDIKRAENARKRAEERLRNKKEIDVKRAELALFRSIARIKIKEL</sequence>
<feature type="chain" id="PRO_1000056473" description="ATP synthase epsilon chain">
    <location>
        <begin position="1"/>
        <end position="133"/>
    </location>
</feature>
<gene>
    <name evidence="1" type="primary">atpC</name>
    <name type="ordered locus">CLB_0193</name>
</gene>
<organism>
    <name type="scientific">Clostridium botulinum (strain ATCC 19397 / Type A)</name>
    <dbReference type="NCBI Taxonomy" id="441770"/>
    <lineage>
        <taxon>Bacteria</taxon>
        <taxon>Bacillati</taxon>
        <taxon>Bacillota</taxon>
        <taxon>Clostridia</taxon>
        <taxon>Eubacteriales</taxon>
        <taxon>Clostridiaceae</taxon>
        <taxon>Clostridium</taxon>
    </lineage>
</organism>
<evidence type="ECO:0000255" key="1">
    <source>
        <dbReference type="HAMAP-Rule" id="MF_00530"/>
    </source>
</evidence>
<accession>A7FQI0</accession>
<dbReference type="EMBL" id="CP000726">
    <property type="protein sequence ID" value="ABS33378.1"/>
    <property type="molecule type" value="Genomic_DNA"/>
</dbReference>
<dbReference type="RefSeq" id="WP_003387838.1">
    <property type="nucleotide sequence ID" value="NC_009697.1"/>
</dbReference>
<dbReference type="SMR" id="A7FQI0"/>
<dbReference type="KEGG" id="cba:CLB_0193"/>
<dbReference type="HOGENOM" id="CLU_084338_1_1_9"/>
<dbReference type="GO" id="GO:0005886">
    <property type="term" value="C:plasma membrane"/>
    <property type="evidence" value="ECO:0007669"/>
    <property type="project" value="UniProtKB-SubCell"/>
</dbReference>
<dbReference type="GO" id="GO:0045259">
    <property type="term" value="C:proton-transporting ATP synthase complex"/>
    <property type="evidence" value="ECO:0007669"/>
    <property type="project" value="UniProtKB-KW"/>
</dbReference>
<dbReference type="GO" id="GO:0005524">
    <property type="term" value="F:ATP binding"/>
    <property type="evidence" value="ECO:0007669"/>
    <property type="project" value="UniProtKB-UniRule"/>
</dbReference>
<dbReference type="GO" id="GO:0046933">
    <property type="term" value="F:proton-transporting ATP synthase activity, rotational mechanism"/>
    <property type="evidence" value="ECO:0007669"/>
    <property type="project" value="UniProtKB-UniRule"/>
</dbReference>
<dbReference type="CDD" id="cd12152">
    <property type="entry name" value="F1-ATPase_delta"/>
    <property type="match status" value="1"/>
</dbReference>
<dbReference type="Gene3D" id="1.20.5.440">
    <property type="entry name" value="ATP synthase delta/epsilon subunit, C-terminal domain"/>
    <property type="match status" value="1"/>
</dbReference>
<dbReference type="Gene3D" id="2.60.15.10">
    <property type="entry name" value="F0F1 ATP synthase delta/epsilon subunit, N-terminal"/>
    <property type="match status" value="1"/>
</dbReference>
<dbReference type="HAMAP" id="MF_00530">
    <property type="entry name" value="ATP_synth_epsil_bac"/>
    <property type="match status" value="1"/>
</dbReference>
<dbReference type="InterPro" id="IPR036794">
    <property type="entry name" value="ATP_F1_dsu/esu_C_sf"/>
</dbReference>
<dbReference type="InterPro" id="IPR001469">
    <property type="entry name" value="ATP_synth_F1_dsu/esu"/>
</dbReference>
<dbReference type="InterPro" id="IPR020546">
    <property type="entry name" value="ATP_synth_F1_dsu/esu_N"/>
</dbReference>
<dbReference type="InterPro" id="IPR020547">
    <property type="entry name" value="ATP_synth_F1_esu_C"/>
</dbReference>
<dbReference type="InterPro" id="IPR036771">
    <property type="entry name" value="ATPsynth_dsu/esu_N"/>
</dbReference>
<dbReference type="NCBIfam" id="TIGR01216">
    <property type="entry name" value="ATP_synt_epsi"/>
    <property type="match status" value="1"/>
</dbReference>
<dbReference type="NCBIfam" id="NF009984">
    <property type="entry name" value="PRK13450.1"/>
    <property type="match status" value="1"/>
</dbReference>
<dbReference type="PANTHER" id="PTHR13822">
    <property type="entry name" value="ATP SYNTHASE DELTA/EPSILON CHAIN"/>
    <property type="match status" value="1"/>
</dbReference>
<dbReference type="PANTHER" id="PTHR13822:SF10">
    <property type="entry name" value="ATP SYNTHASE EPSILON CHAIN, CHLOROPLASTIC"/>
    <property type="match status" value="1"/>
</dbReference>
<dbReference type="Pfam" id="PF00401">
    <property type="entry name" value="ATP-synt_DE"/>
    <property type="match status" value="1"/>
</dbReference>
<dbReference type="Pfam" id="PF02823">
    <property type="entry name" value="ATP-synt_DE_N"/>
    <property type="match status" value="1"/>
</dbReference>
<dbReference type="SUPFAM" id="SSF46604">
    <property type="entry name" value="Epsilon subunit of F1F0-ATP synthase C-terminal domain"/>
    <property type="match status" value="1"/>
</dbReference>
<dbReference type="SUPFAM" id="SSF51344">
    <property type="entry name" value="Epsilon subunit of F1F0-ATP synthase N-terminal domain"/>
    <property type="match status" value="1"/>
</dbReference>
<name>ATPE_CLOB1</name>
<comment type="function">
    <text evidence="1">Produces ATP from ADP in the presence of a proton gradient across the membrane.</text>
</comment>
<comment type="subunit">
    <text evidence="1">F-type ATPases have 2 components, CF(1) - the catalytic core - and CF(0) - the membrane proton channel. CF(1) has five subunits: alpha(3), beta(3), gamma(1), delta(1), epsilon(1). CF(0) has three main subunits: a, b and c.</text>
</comment>
<comment type="subcellular location">
    <subcellularLocation>
        <location evidence="1">Cell membrane</location>
        <topology evidence="1">Peripheral membrane protein</topology>
    </subcellularLocation>
</comment>
<comment type="similarity">
    <text evidence="1">Belongs to the ATPase epsilon chain family.</text>
</comment>
<protein>
    <recommendedName>
        <fullName evidence="1">ATP synthase epsilon chain</fullName>
    </recommendedName>
    <alternativeName>
        <fullName evidence="1">ATP synthase F1 sector epsilon subunit</fullName>
    </alternativeName>
    <alternativeName>
        <fullName evidence="1">F-ATPase epsilon subunit</fullName>
    </alternativeName>
</protein>
<reference key="1">
    <citation type="journal article" date="2007" name="PLoS ONE">
        <title>Analysis of the neurotoxin complex genes in Clostridium botulinum A1-A4 and B1 strains: BoNT/A3, /Ba4 and /B1 clusters are located within plasmids.</title>
        <authorList>
            <person name="Smith T.J."/>
            <person name="Hill K.K."/>
            <person name="Foley B.T."/>
            <person name="Detter J.C."/>
            <person name="Munk A.C."/>
            <person name="Bruce D.C."/>
            <person name="Doggett N.A."/>
            <person name="Smith L.A."/>
            <person name="Marks J.D."/>
            <person name="Xie G."/>
            <person name="Brettin T.S."/>
        </authorList>
    </citation>
    <scope>NUCLEOTIDE SEQUENCE [LARGE SCALE GENOMIC DNA]</scope>
    <source>
        <strain>ATCC 19397 / Type A</strain>
    </source>
</reference>